<gene>
    <name type="primary">TUBB4A</name>
    <name type="synonym">TUBB4</name>
</gene>
<comment type="function">
    <text evidence="8 9 10">Tubulin is the major constituent of microtubules, a cylinder consisting of laterally associated linear protofilaments composed of alpha- and beta-tubulin heterodimers (PubMed:2207090, PubMed:6504138, PubMed:7704569). Microtubules grow by the addition of GTP-tubulin dimers to the microtubule end, where a stabilizing cap forms. Below the cap, tubulin dimers are in GDP-bound state, owing to GTPase activity of alpha-tubulin (PubMed:2207090, PubMed:6504138, PubMed:7704569).</text>
</comment>
<comment type="cofactor">
    <cofactor evidence="3">
        <name>Mg(2+)</name>
        <dbReference type="ChEBI" id="CHEBI:18420"/>
    </cofactor>
</comment>
<comment type="subunit">
    <text evidence="8 9 10">Dimer of alpha and beta chains (PubMed:2207090, PubMed:6504138, PubMed:7704569). A typical microtubule is a hollow water-filled tube with an outer diameter of 25 nm and an inner diameter of 15 nM. Alpha-beta heterodimers associate head-to-tail to form protofilaments running lengthwise along the microtubule wall with the beta-tubulin subunit facing the microtubule plus end conferring a structural polarity. Microtubules usually have 13 protofilaments but different protofilament numbers can be found in some organisms and specialized cells.</text>
</comment>
<comment type="subcellular location">
    <subcellularLocation>
        <location evidence="8 9 10">Cytoplasm</location>
        <location evidence="8 9 10">Cytoskeleton</location>
    </subcellularLocation>
</comment>
<comment type="domain">
    <text>The highly acidic C-terminal region may bind cations such as calcium.</text>
</comment>
<comment type="domain">
    <text evidence="2">The MREI motif is common among all beta-tubulin isoforms and may be critical for tubulin autoregulation.</text>
</comment>
<comment type="PTM">
    <text evidence="7">Some glutamate residues at the C-terminus are polyglycylated, resulting in polyglycine chains on the gamma-carboxyl group. Glycylation is mainly limited to tubulin incorporated into axonemes (cilia and flagella) whereas glutamylation is prevalent in neuronal cells, centrioles, axonemes, and the mitotic spindle. Both modifications can coexist on the same protein on adjacent residues, and lowering polyglycylation levels increases polyglutamylation, and reciprocally. Cilia and flagella glycylation is required for their stability and maintenance. Flagella glycylation controls sperm motility.</text>
</comment>
<comment type="PTM">
    <text evidence="6 7">Some glutamate residues at the C-terminus are polyglutamylated, resulting in polyglutamate chains on the gamma-carboxyl group (By similarity). Polyglutamylation plays a key role in microtubule severing by spastin (SPAST). SPAST preferentially recognizes and acts on microtubules decorated with short polyglutamate tails: severing activity by SPAST increases as the number of glutamates per tubulin rises from one to eight, but decreases beyond this glutamylation threshold (By similarity). Glutamylation is also involved in cilia motility (By similarity).</text>
</comment>
<comment type="PTM">
    <text evidence="1">Phosphorylated on Ser-172 by CDK1 during the cell cycle, from metaphase to telophase, but not in interphase. This phosphorylation inhibits tubulin incorporation into microtubules.</text>
</comment>
<comment type="similarity">
    <text evidence="11">Belongs to the tubulin family.</text>
</comment>
<name>TBB4A_BOVIN</name>
<reference key="1">
    <citation type="submission" date="2005-08" db="EMBL/GenBank/DDBJ databases">
        <authorList>
            <consortium name="NIH - Mammalian Gene Collection (MGC) project"/>
        </authorList>
    </citation>
    <scope>NUCLEOTIDE SEQUENCE [LARGE SCALE MRNA]</scope>
    <source>
        <strain>Hereford</strain>
        <tissue>Kidney</tissue>
    </source>
</reference>
<reference key="2">
    <citation type="journal article" date="1984" name="Nature">
        <title>Dynamic instability of microtubule growth.</title>
        <authorList>
            <person name="Mitchison T."/>
            <person name="Kirschner M."/>
        </authorList>
    </citation>
    <scope>FUNCTION</scope>
    <scope>SUBUNIT</scope>
    <scope>SUBCELLULAR LOCATION</scope>
</reference>
<reference key="3">
    <citation type="journal article" date="1990" name="Biochemistry">
        <title>Role of GTP hydrolysis in microtubule polymerization: evidence for a coupled hydrolysis mechanism.</title>
        <authorList>
            <person name="Stewart R.J."/>
            <person name="Farrell K.W."/>
            <person name="Wilson L."/>
        </authorList>
    </citation>
    <scope>FUNCTION</scope>
    <scope>SUBUNIT</scope>
    <scope>SUBCELLULAR LOCATION</scope>
</reference>
<reference key="4">
    <citation type="journal article" date="1994" name="Curr. Biol.">
        <title>The minimum GTP cap required to stabilize microtubules.</title>
        <authorList>
            <person name="Drechsel D.N."/>
            <person name="Kirschner M.W."/>
        </authorList>
    </citation>
    <scope>FUNCTION</scope>
    <scope>SUBUNIT</scope>
    <scope>SUBCELLULAR LOCATION</scope>
</reference>
<proteinExistence type="evidence at protein level"/>
<feature type="chain" id="PRO_0000233025" description="Tubulin beta-4A chain">
    <location>
        <begin position="1"/>
        <end position="444"/>
    </location>
</feature>
<feature type="short sequence motif" description="MREI motif" evidence="2">
    <location>
        <begin position="1"/>
        <end position="4"/>
    </location>
</feature>
<feature type="binding site" evidence="4">
    <location>
        <position position="11"/>
    </location>
    <ligand>
        <name>GTP</name>
        <dbReference type="ChEBI" id="CHEBI:37565"/>
    </ligand>
</feature>
<feature type="binding site" evidence="3">
    <location>
        <position position="69"/>
    </location>
    <ligand>
        <name>GTP</name>
        <dbReference type="ChEBI" id="CHEBI:37565"/>
    </ligand>
</feature>
<feature type="binding site" evidence="3">
    <location>
        <position position="69"/>
    </location>
    <ligand>
        <name>Mg(2+)</name>
        <dbReference type="ChEBI" id="CHEBI:18420"/>
    </ligand>
</feature>
<feature type="binding site" evidence="4">
    <location>
        <position position="138"/>
    </location>
    <ligand>
        <name>GTP</name>
        <dbReference type="ChEBI" id="CHEBI:37565"/>
    </ligand>
</feature>
<feature type="binding site" evidence="4">
    <location>
        <position position="142"/>
    </location>
    <ligand>
        <name>GTP</name>
        <dbReference type="ChEBI" id="CHEBI:37565"/>
    </ligand>
</feature>
<feature type="binding site" evidence="4">
    <location>
        <position position="143"/>
    </location>
    <ligand>
        <name>GTP</name>
        <dbReference type="ChEBI" id="CHEBI:37565"/>
    </ligand>
</feature>
<feature type="binding site" evidence="4">
    <location>
        <position position="144"/>
    </location>
    <ligand>
        <name>GTP</name>
        <dbReference type="ChEBI" id="CHEBI:37565"/>
    </ligand>
</feature>
<feature type="binding site" evidence="4">
    <location>
        <position position="204"/>
    </location>
    <ligand>
        <name>GTP</name>
        <dbReference type="ChEBI" id="CHEBI:37565"/>
    </ligand>
</feature>
<feature type="binding site" evidence="4">
    <location>
        <position position="226"/>
    </location>
    <ligand>
        <name>GTP</name>
        <dbReference type="ChEBI" id="CHEBI:37565"/>
    </ligand>
</feature>
<feature type="modified residue" description="Phosphoserine; by CDK1" evidence="1">
    <location>
        <position position="172"/>
    </location>
</feature>
<feature type="modified residue" description="5-glutamyl polyglutamate" evidence="5">
    <location>
        <position position="436"/>
    </location>
</feature>
<accession>Q3ZBU7</accession>
<evidence type="ECO:0000250" key="1">
    <source>
        <dbReference type="UniProtKB" id="P04350"/>
    </source>
</evidence>
<evidence type="ECO:0000250" key="2">
    <source>
        <dbReference type="UniProtKB" id="P07437"/>
    </source>
</evidence>
<evidence type="ECO:0000250" key="3">
    <source>
        <dbReference type="UniProtKB" id="P68363"/>
    </source>
</evidence>
<evidence type="ECO:0000250" key="4">
    <source>
        <dbReference type="UniProtKB" id="Q13509"/>
    </source>
</evidence>
<evidence type="ECO:0000250" key="5">
    <source>
        <dbReference type="UniProtKB" id="Q2T9S0"/>
    </source>
</evidence>
<evidence type="ECO:0000250" key="6">
    <source>
        <dbReference type="UniProtKB" id="Q71U36"/>
    </source>
</evidence>
<evidence type="ECO:0000250" key="7">
    <source>
        <dbReference type="UniProtKB" id="Q9D6F9"/>
    </source>
</evidence>
<evidence type="ECO:0000269" key="8">
    <source>
    </source>
</evidence>
<evidence type="ECO:0000269" key="9">
    <source>
    </source>
</evidence>
<evidence type="ECO:0000269" key="10">
    <source>
    </source>
</evidence>
<evidence type="ECO:0000305" key="11"/>
<organism>
    <name type="scientific">Bos taurus</name>
    <name type="common">Bovine</name>
    <dbReference type="NCBI Taxonomy" id="9913"/>
    <lineage>
        <taxon>Eukaryota</taxon>
        <taxon>Metazoa</taxon>
        <taxon>Chordata</taxon>
        <taxon>Craniata</taxon>
        <taxon>Vertebrata</taxon>
        <taxon>Euteleostomi</taxon>
        <taxon>Mammalia</taxon>
        <taxon>Eutheria</taxon>
        <taxon>Laurasiatheria</taxon>
        <taxon>Artiodactyla</taxon>
        <taxon>Ruminantia</taxon>
        <taxon>Pecora</taxon>
        <taxon>Bovidae</taxon>
        <taxon>Bovinae</taxon>
        <taxon>Bos</taxon>
    </lineage>
</organism>
<keyword id="KW-0963">Cytoplasm</keyword>
<keyword id="KW-0206">Cytoskeleton</keyword>
<keyword id="KW-0342">GTP-binding</keyword>
<keyword id="KW-1017">Isopeptide bond</keyword>
<keyword id="KW-0460">Magnesium</keyword>
<keyword id="KW-0479">Metal-binding</keyword>
<keyword id="KW-0493">Microtubule</keyword>
<keyword id="KW-0547">Nucleotide-binding</keyword>
<keyword id="KW-0597">Phosphoprotein</keyword>
<keyword id="KW-1185">Reference proteome</keyword>
<dbReference type="EMBL" id="BC103098">
    <property type="protein sequence ID" value="AAI03099.1"/>
    <property type="molecule type" value="mRNA"/>
</dbReference>
<dbReference type="RefSeq" id="NP_001029869.1">
    <property type="nucleotide sequence ID" value="NM_001034697.2"/>
</dbReference>
<dbReference type="EMDB" id="EMD-8546"/>
<dbReference type="EMDB" id="EMD-8547"/>
<dbReference type="SMR" id="Q3ZBU7"/>
<dbReference type="FunCoup" id="Q3ZBU7">
    <property type="interactions" value="898"/>
</dbReference>
<dbReference type="STRING" id="9913.ENSBTAP00000014560"/>
<dbReference type="iPTMnet" id="Q3ZBU7"/>
<dbReference type="PaxDb" id="9913-ENSBTAP00000014560"/>
<dbReference type="PeptideAtlas" id="Q3ZBU7"/>
<dbReference type="GeneID" id="540236"/>
<dbReference type="KEGG" id="bta:540236"/>
<dbReference type="CTD" id="10382"/>
<dbReference type="VEuPathDB" id="HostDB:ENSBTAG00000021013"/>
<dbReference type="eggNOG" id="KOG1375">
    <property type="taxonomic scope" value="Eukaryota"/>
</dbReference>
<dbReference type="HOGENOM" id="CLU_015718_1_1_1"/>
<dbReference type="InParanoid" id="Q3ZBU7"/>
<dbReference type="OMA" id="CFPAGGN"/>
<dbReference type="OrthoDB" id="9820704at2759"/>
<dbReference type="TreeFam" id="TF300298"/>
<dbReference type="Reactome" id="R-BTA-190840">
    <property type="pathway name" value="Microtubule-dependent trafficking of connexons from Golgi to the plasma membrane"/>
</dbReference>
<dbReference type="Reactome" id="R-BTA-2132295">
    <property type="pathway name" value="MHC class II antigen presentation"/>
</dbReference>
<dbReference type="Reactome" id="R-BTA-2467813">
    <property type="pathway name" value="Separation of Sister Chromatids"/>
</dbReference>
<dbReference type="Reactome" id="R-BTA-2500257">
    <property type="pathway name" value="Resolution of Sister Chromatid Cohesion"/>
</dbReference>
<dbReference type="Reactome" id="R-BTA-2565942">
    <property type="pathway name" value="Regulation of PLK1 Activity at G2/M Transition"/>
</dbReference>
<dbReference type="Reactome" id="R-BTA-3371497">
    <property type="pathway name" value="HSP90 chaperone cycle for steroid hormone receptors (SHR) in the presence of ligand"/>
</dbReference>
<dbReference type="Reactome" id="R-BTA-380259">
    <property type="pathway name" value="Loss of Nlp from mitotic centrosomes"/>
</dbReference>
<dbReference type="Reactome" id="R-BTA-380270">
    <property type="pathway name" value="Recruitment of mitotic centrosome proteins and complexes"/>
</dbReference>
<dbReference type="Reactome" id="R-BTA-380284">
    <property type="pathway name" value="Loss of proteins required for interphase microtubule organization from the centrosome"/>
</dbReference>
<dbReference type="Reactome" id="R-BTA-380320">
    <property type="pathway name" value="Recruitment of NuMA to mitotic centrosomes"/>
</dbReference>
<dbReference type="Reactome" id="R-BTA-5610787">
    <property type="pathway name" value="Hedgehog 'off' state"/>
</dbReference>
<dbReference type="Reactome" id="R-BTA-5617833">
    <property type="pathway name" value="Cilium Assembly"/>
</dbReference>
<dbReference type="Reactome" id="R-BTA-5620912">
    <property type="pathway name" value="Anchoring of the basal body to the plasma membrane"/>
</dbReference>
<dbReference type="Reactome" id="R-BTA-5620924">
    <property type="pathway name" value="Intraflagellar transport"/>
</dbReference>
<dbReference type="Reactome" id="R-BTA-5626467">
    <property type="pathway name" value="RHO GTPases activate IQGAPs"/>
</dbReference>
<dbReference type="Reactome" id="R-BTA-5663220">
    <property type="pathway name" value="RHO GTPases Activate Formins"/>
</dbReference>
<dbReference type="Reactome" id="R-BTA-6807878">
    <property type="pathway name" value="COPI-mediated anterograde transport"/>
</dbReference>
<dbReference type="Reactome" id="R-BTA-6811434">
    <property type="pathway name" value="COPI-dependent Golgi-to-ER retrograde traffic"/>
</dbReference>
<dbReference type="Reactome" id="R-BTA-6811436">
    <property type="pathway name" value="COPI-independent Golgi-to-ER retrograde traffic"/>
</dbReference>
<dbReference type="Reactome" id="R-BTA-68877">
    <property type="pathway name" value="Mitotic Prometaphase"/>
</dbReference>
<dbReference type="Reactome" id="R-BTA-8852276">
    <property type="pathway name" value="The role of GTSE1 in G2/M progression after G2 checkpoint"/>
</dbReference>
<dbReference type="Reactome" id="R-BTA-8854518">
    <property type="pathway name" value="AURKA Activation by TPX2"/>
</dbReference>
<dbReference type="Reactome" id="R-BTA-8955332">
    <property type="pathway name" value="Carboxyterminal post-translational modifications of tubulin"/>
</dbReference>
<dbReference type="Reactome" id="R-BTA-9646399">
    <property type="pathway name" value="Aggrephagy"/>
</dbReference>
<dbReference type="Reactome" id="R-BTA-9648025">
    <property type="pathway name" value="EML4 and NUDC in mitotic spindle formation"/>
</dbReference>
<dbReference type="Reactome" id="R-BTA-9668328">
    <property type="pathway name" value="Sealing of the nuclear envelope (NE) by ESCRT-III"/>
</dbReference>
<dbReference type="Reactome" id="R-BTA-983189">
    <property type="pathway name" value="Kinesins"/>
</dbReference>
<dbReference type="Proteomes" id="UP000009136">
    <property type="component" value="Chromosome 7"/>
</dbReference>
<dbReference type="Bgee" id="ENSBTAG00000021013">
    <property type="expression patterns" value="Expressed in prefrontal cortex and 96 other cell types or tissues"/>
</dbReference>
<dbReference type="GO" id="GO:0005737">
    <property type="term" value="C:cytoplasm"/>
    <property type="evidence" value="ECO:0000318"/>
    <property type="project" value="GO_Central"/>
</dbReference>
<dbReference type="GO" id="GO:0005829">
    <property type="term" value="C:cytosol"/>
    <property type="evidence" value="ECO:0000304"/>
    <property type="project" value="Reactome"/>
</dbReference>
<dbReference type="GO" id="GO:0005874">
    <property type="term" value="C:microtubule"/>
    <property type="evidence" value="ECO:0000318"/>
    <property type="project" value="GO_Central"/>
</dbReference>
<dbReference type="GO" id="GO:0005525">
    <property type="term" value="F:GTP binding"/>
    <property type="evidence" value="ECO:0000318"/>
    <property type="project" value="GO_Central"/>
</dbReference>
<dbReference type="GO" id="GO:0003924">
    <property type="term" value="F:GTPase activity"/>
    <property type="evidence" value="ECO:0007669"/>
    <property type="project" value="InterPro"/>
</dbReference>
<dbReference type="GO" id="GO:0046872">
    <property type="term" value="F:metal ion binding"/>
    <property type="evidence" value="ECO:0007669"/>
    <property type="project" value="UniProtKB-KW"/>
</dbReference>
<dbReference type="GO" id="GO:0005200">
    <property type="term" value="F:structural constituent of cytoskeleton"/>
    <property type="evidence" value="ECO:0000318"/>
    <property type="project" value="GO_Central"/>
</dbReference>
<dbReference type="GO" id="GO:0000226">
    <property type="term" value="P:microtubule cytoskeleton organization"/>
    <property type="evidence" value="ECO:0000318"/>
    <property type="project" value="GO_Central"/>
</dbReference>
<dbReference type="GO" id="GO:0000278">
    <property type="term" value="P:mitotic cell cycle"/>
    <property type="evidence" value="ECO:0000318"/>
    <property type="project" value="GO_Central"/>
</dbReference>
<dbReference type="CDD" id="cd02187">
    <property type="entry name" value="beta_tubulin"/>
    <property type="match status" value="1"/>
</dbReference>
<dbReference type="FunFam" id="1.10.287.600:FF:000002">
    <property type="entry name" value="Tubulin beta chain"/>
    <property type="match status" value="1"/>
</dbReference>
<dbReference type="FunFam" id="3.30.1330.20:FF:000002">
    <property type="entry name" value="Tubulin beta chain"/>
    <property type="match status" value="1"/>
</dbReference>
<dbReference type="FunFam" id="3.40.50.1440:FF:000003">
    <property type="entry name" value="Tubulin beta chain"/>
    <property type="match status" value="1"/>
</dbReference>
<dbReference type="Gene3D" id="1.10.287.600">
    <property type="entry name" value="Helix hairpin bin"/>
    <property type="match status" value="1"/>
</dbReference>
<dbReference type="Gene3D" id="3.30.1330.20">
    <property type="entry name" value="Tubulin/FtsZ, C-terminal domain"/>
    <property type="match status" value="1"/>
</dbReference>
<dbReference type="Gene3D" id="3.40.50.1440">
    <property type="entry name" value="Tubulin/FtsZ, GTPase domain"/>
    <property type="match status" value="1"/>
</dbReference>
<dbReference type="InterPro" id="IPR013838">
    <property type="entry name" value="Beta-tubulin_BS"/>
</dbReference>
<dbReference type="InterPro" id="IPR002453">
    <property type="entry name" value="Beta_tubulin"/>
</dbReference>
<dbReference type="InterPro" id="IPR008280">
    <property type="entry name" value="Tub_FtsZ_C"/>
</dbReference>
<dbReference type="InterPro" id="IPR000217">
    <property type="entry name" value="Tubulin"/>
</dbReference>
<dbReference type="InterPro" id="IPR037103">
    <property type="entry name" value="Tubulin/FtsZ-like_C"/>
</dbReference>
<dbReference type="InterPro" id="IPR018316">
    <property type="entry name" value="Tubulin/FtsZ_2-layer-sand-dom"/>
</dbReference>
<dbReference type="InterPro" id="IPR036525">
    <property type="entry name" value="Tubulin/FtsZ_GTPase_sf"/>
</dbReference>
<dbReference type="InterPro" id="IPR023123">
    <property type="entry name" value="Tubulin_C"/>
</dbReference>
<dbReference type="InterPro" id="IPR017975">
    <property type="entry name" value="Tubulin_CS"/>
</dbReference>
<dbReference type="InterPro" id="IPR003008">
    <property type="entry name" value="Tubulin_FtsZ_GTPase"/>
</dbReference>
<dbReference type="PANTHER" id="PTHR11588">
    <property type="entry name" value="TUBULIN"/>
    <property type="match status" value="1"/>
</dbReference>
<dbReference type="Pfam" id="PF00091">
    <property type="entry name" value="Tubulin"/>
    <property type="match status" value="1"/>
</dbReference>
<dbReference type="Pfam" id="PF03953">
    <property type="entry name" value="Tubulin_C"/>
    <property type="match status" value="1"/>
</dbReference>
<dbReference type="PRINTS" id="PR01163">
    <property type="entry name" value="BETATUBULIN"/>
</dbReference>
<dbReference type="PRINTS" id="PR01161">
    <property type="entry name" value="TUBULIN"/>
</dbReference>
<dbReference type="SMART" id="SM00864">
    <property type="entry name" value="Tubulin"/>
    <property type="match status" value="1"/>
</dbReference>
<dbReference type="SMART" id="SM00865">
    <property type="entry name" value="Tubulin_C"/>
    <property type="match status" value="1"/>
</dbReference>
<dbReference type="SUPFAM" id="SSF55307">
    <property type="entry name" value="Tubulin C-terminal domain-like"/>
    <property type="match status" value="1"/>
</dbReference>
<dbReference type="SUPFAM" id="SSF52490">
    <property type="entry name" value="Tubulin nucleotide-binding domain-like"/>
    <property type="match status" value="1"/>
</dbReference>
<dbReference type="PROSITE" id="PS00227">
    <property type="entry name" value="TUBULIN"/>
    <property type="match status" value="1"/>
</dbReference>
<dbReference type="PROSITE" id="PS00228">
    <property type="entry name" value="TUBULIN_B_AUTOREG"/>
    <property type="match status" value="1"/>
</dbReference>
<sequence length="444" mass="49586">MREIVHLQAGQCGNQIGAKFWEVISDEHGIDPTGTYHGDSDLQLERINVYYNEATGGNYVPRAVLVDLEPGTMDSVRSGPFGQIFRPDNFVFGQSGAGNNWAKGHYTEGAELVDAVLDVVRKEAESCDCLQGFQLTHSLGGGTGSGMGTLLISKIREEFPDRIMNTFSVVPSPKVSDTVVEPYNATLSVHQLVENTDETYCIDNEALYDICFRTLKLTTPTYGDLNHLVSATMSGVTTCLRFPGQLNADLRKLAVNMVPFPRLHFFMPGFAPLTSRGSQQYRALTVPELTQQMFDAKNMMAACDPRHGRYLTVAAVFRGRMSMKEVDEQMLSVQSKNSSYFVEWIPNNVKTAVCDIPPRGLKMAATFIGNSTAIQELFKRISEQFTAMFRRKAFLHWYTGEGMDEMEFTEAESNMNDLVSEYQQYQDATAEEGEFEEEAEEEVA</sequence>
<protein>
    <recommendedName>
        <fullName>Tubulin beta-4A chain</fullName>
    </recommendedName>
    <alternativeName>
        <fullName>Tubulin beta-4 chain</fullName>
    </alternativeName>
</protein>